<accession>Q6AKB8</accession>
<proteinExistence type="inferred from homology"/>
<evidence type="ECO:0000255" key="1">
    <source>
        <dbReference type="HAMAP-Rule" id="MF_00203"/>
    </source>
</evidence>
<name>UVRC_DESPS</name>
<dbReference type="EMBL" id="CR522870">
    <property type="protein sequence ID" value="CAG37207.1"/>
    <property type="molecule type" value="Genomic_DNA"/>
</dbReference>
<dbReference type="SMR" id="Q6AKB8"/>
<dbReference type="STRING" id="177439.DP2478"/>
<dbReference type="KEGG" id="dps:DP2478"/>
<dbReference type="eggNOG" id="COG0322">
    <property type="taxonomic scope" value="Bacteria"/>
</dbReference>
<dbReference type="HOGENOM" id="CLU_014841_3_2_7"/>
<dbReference type="OrthoDB" id="9804933at2"/>
<dbReference type="Proteomes" id="UP000000602">
    <property type="component" value="Chromosome"/>
</dbReference>
<dbReference type="GO" id="GO:0005737">
    <property type="term" value="C:cytoplasm"/>
    <property type="evidence" value="ECO:0007669"/>
    <property type="project" value="UniProtKB-SubCell"/>
</dbReference>
<dbReference type="GO" id="GO:0009380">
    <property type="term" value="C:excinuclease repair complex"/>
    <property type="evidence" value="ECO:0007669"/>
    <property type="project" value="InterPro"/>
</dbReference>
<dbReference type="GO" id="GO:0003677">
    <property type="term" value="F:DNA binding"/>
    <property type="evidence" value="ECO:0007669"/>
    <property type="project" value="UniProtKB-UniRule"/>
</dbReference>
<dbReference type="GO" id="GO:0009381">
    <property type="term" value="F:excinuclease ABC activity"/>
    <property type="evidence" value="ECO:0007669"/>
    <property type="project" value="UniProtKB-UniRule"/>
</dbReference>
<dbReference type="GO" id="GO:0006289">
    <property type="term" value="P:nucleotide-excision repair"/>
    <property type="evidence" value="ECO:0007669"/>
    <property type="project" value="UniProtKB-UniRule"/>
</dbReference>
<dbReference type="GO" id="GO:0009432">
    <property type="term" value="P:SOS response"/>
    <property type="evidence" value="ECO:0007669"/>
    <property type="project" value="UniProtKB-UniRule"/>
</dbReference>
<dbReference type="CDD" id="cd10434">
    <property type="entry name" value="GIY-YIG_UvrC_Cho"/>
    <property type="match status" value="1"/>
</dbReference>
<dbReference type="FunFam" id="3.40.1440.10:FF:000001">
    <property type="entry name" value="UvrABC system protein C"/>
    <property type="match status" value="1"/>
</dbReference>
<dbReference type="Gene3D" id="1.10.150.20">
    <property type="entry name" value="5' to 3' exonuclease, C-terminal subdomain"/>
    <property type="match status" value="1"/>
</dbReference>
<dbReference type="Gene3D" id="3.40.1440.10">
    <property type="entry name" value="GIY-YIG endonuclease"/>
    <property type="match status" value="1"/>
</dbReference>
<dbReference type="Gene3D" id="4.10.860.10">
    <property type="entry name" value="UVR domain"/>
    <property type="match status" value="1"/>
</dbReference>
<dbReference type="Gene3D" id="3.30.420.340">
    <property type="entry name" value="UvrC, RNAse H endonuclease domain"/>
    <property type="match status" value="1"/>
</dbReference>
<dbReference type="HAMAP" id="MF_00203">
    <property type="entry name" value="UvrC"/>
    <property type="match status" value="1"/>
</dbReference>
<dbReference type="InterPro" id="IPR000305">
    <property type="entry name" value="GIY-YIG_endonuc"/>
</dbReference>
<dbReference type="InterPro" id="IPR035901">
    <property type="entry name" value="GIY-YIG_endonuc_sf"/>
</dbReference>
<dbReference type="InterPro" id="IPR047296">
    <property type="entry name" value="GIY-YIG_UvrC_Cho"/>
</dbReference>
<dbReference type="InterPro" id="IPR010994">
    <property type="entry name" value="RuvA_2-like"/>
</dbReference>
<dbReference type="InterPro" id="IPR001943">
    <property type="entry name" value="UVR_dom"/>
</dbReference>
<dbReference type="InterPro" id="IPR036876">
    <property type="entry name" value="UVR_dom_sf"/>
</dbReference>
<dbReference type="InterPro" id="IPR050066">
    <property type="entry name" value="UvrABC_protein_C"/>
</dbReference>
<dbReference type="InterPro" id="IPR004791">
    <property type="entry name" value="UvrC"/>
</dbReference>
<dbReference type="InterPro" id="IPR001162">
    <property type="entry name" value="UvrC_RNase_H_dom"/>
</dbReference>
<dbReference type="InterPro" id="IPR038476">
    <property type="entry name" value="UvrC_RNase_H_dom_sf"/>
</dbReference>
<dbReference type="NCBIfam" id="NF001824">
    <property type="entry name" value="PRK00558.1-5"/>
    <property type="match status" value="1"/>
</dbReference>
<dbReference type="NCBIfam" id="TIGR00194">
    <property type="entry name" value="uvrC"/>
    <property type="match status" value="1"/>
</dbReference>
<dbReference type="PANTHER" id="PTHR30562:SF1">
    <property type="entry name" value="UVRABC SYSTEM PROTEIN C"/>
    <property type="match status" value="1"/>
</dbReference>
<dbReference type="PANTHER" id="PTHR30562">
    <property type="entry name" value="UVRC/OXIDOREDUCTASE"/>
    <property type="match status" value="1"/>
</dbReference>
<dbReference type="Pfam" id="PF01541">
    <property type="entry name" value="GIY-YIG"/>
    <property type="match status" value="1"/>
</dbReference>
<dbReference type="Pfam" id="PF14520">
    <property type="entry name" value="HHH_5"/>
    <property type="match status" value="1"/>
</dbReference>
<dbReference type="Pfam" id="PF02151">
    <property type="entry name" value="UVR"/>
    <property type="match status" value="1"/>
</dbReference>
<dbReference type="Pfam" id="PF22920">
    <property type="entry name" value="UvrC_RNaseH"/>
    <property type="match status" value="1"/>
</dbReference>
<dbReference type="Pfam" id="PF08459">
    <property type="entry name" value="UvrC_RNaseH_dom"/>
    <property type="match status" value="1"/>
</dbReference>
<dbReference type="SMART" id="SM00465">
    <property type="entry name" value="GIYc"/>
    <property type="match status" value="1"/>
</dbReference>
<dbReference type="SUPFAM" id="SSF46600">
    <property type="entry name" value="C-terminal UvrC-binding domain of UvrB"/>
    <property type="match status" value="1"/>
</dbReference>
<dbReference type="SUPFAM" id="SSF82771">
    <property type="entry name" value="GIY-YIG endonuclease"/>
    <property type="match status" value="1"/>
</dbReference>
<dbReference type="SUPFAM" id="SSF47781">
    <property type="entry name" value="RuvA domain 2-like"/>
    <property type="match status" value="1"/>
</dbReference>
<dbReference type="PROSITE" id="PS50164">
    <property type="entry name" value="GIY_YIG"/>
    <property type="match status" value="1"/>
</dbReference>
<dbReference type="PROSITE" id="PS50151">
    <property type="entry name" value="UVR"/>
    <property type="match status" value="1"/>
</dbReference>
<dbReference type="PROSITE" id="PS50165">
    <property type="entry name" value="UVRC"/>
    <property type="match status" value="1"/>
</dbReference>
<keyword id="KW-0963">Cytoplasm</keyword>
<keyword id="KW-0227">DNA damage</keyword>
<keyword id="KW-0228">DNA excision</keyword>
<keyword id="KW-0234">DNA repair</keyword>
<keyword id="KW-0267">Excision nuclease</keyword>
<keyword id="KW-1185">Reference proteome</keyword>
<keyword id="KW-0742">SOS response</keyword>
<gene>
    <name evidence="1" type="primary">uvrC</name>
    <name type="ordered locus">DP2478</name>
</gene>
<feature type="chain" id="PRO_0000227426" description="UvrABC system protein C">
    <location>
        <begin position="1"/>
        <end position="607"/>
    </location>
</feature>
<feature type="domain" description="GIY-YIG" evidence="1">
    <location>
        <begin position="14"/>
        <end position="93"/>
    </location>
</feature>
<feature type="domain" description="UVR" evidence="1">
    <location>
        <begin position="203"/>
        <end position="238"/>
    </location>
</feature>
<protein>
    <recommendedName>
        <fullName evidence="1">UvrABC system protein C</fullName>
        <shortName evidence="1">Protein UvrC</shortName>
    </recommendedName>
    <alternativeName>
        <fullName evidence="1">Excinuclease ABC subunit C</fullName>
    </alternativeName>
</protein>
<sequence>MPMFPEKILQSTPHKPGVYLMLDAKARVIYVGKAKDLVKRLTSYTRHSSSEHNKTTVMLKKVEQVKTIITTTEKEALILEASLIKKHKPRYNIILRDDKNYPYIAVTVGEEWPRVMMVRRKRRDNSRYFGPYSSATAMWATLKLIASLFPLRNCRGEKLRPRTRPCLNRQIGKCLAPCTGNVSRKIYMENVDKILLLLQGKSRDLLAELKRQMLQASERLNFEQAGQFRDQIRALKTTLEKQLVAAGHGKNQDVFGYVRSGTTVAVNILFVRDGLVSGSRSFFIEDYFGLDSQVLSQTISQYYDRETPPPKEILLPFSPENFELLSEYLADFTTHILQIKIPQRGDSTILVEMANTNARQLFAEKEKKERSWQSLGKSIKEKLQLSRTPETIECLDISNISGQHAIGSLVCFSGGEANKSRFRHYKIRTIEGPDDYGMMREVMERRFKRGIKEGNLPNLFVVDGGKGQLGMAMAVARELGITNELDWIGIAKERHEEGEKLYKPGRKNPILLPAHSPVLLYLMRIRDESHRYGITFHRKLRNRATLSSELDEIEGIGDNRKKLLLKKIGSLKKIKEASLQKLQEVEGIGPLLAKKIYTSLQRDKNKS</sequence>
<reference key="1">
    <citation type="journal article" date="2004" name="Environ. Microbiol.">
        <title>The genome of Desulfotalea psychrophila, a sulfate-reducing bacterium from permanently cold Arctic sediments.</title>
        <authorList>
            <person name="Rabus R."/>
            <person name="Ruepp A."/>
            <person name="Frickey T."/>
            <person name="Rattei T."/>
            <person name="Fartmann B."/>
            <person name="Stark M."/>
            <person name="Bauer M."/>
            <person name="Zibat A."/>
            <person name="Lombardot T."/>
            <person name="Becker I."/>
            <person name="Amann J."/>
            <person name="Gellner K."/>
            <person name="Teeling H."/>
            <person name="Leuschner W.D."/>
            <person name="Gloeckner F.-O."/>
            <person name="Lupas A.N."/>
            <person name="Amann R."/>
            <person name="Klenk H.-P."/>
        </authorList>
    </citation>
    <scope>NUCLEOTIDE SEQUENCE [LARGE SCALE GENOMIC DNA]</scope>
    <source>
        <strain>DSM 12343 / LSv54</strain>
    </source>
</reference>
<organism>
    <name type="scientific">Desulfotalea psychrophila (strain LSv54 / DSM 12343)</name>
    <dbReference type="NCBI Taxonomy" id="177439"/>
    <lineage>
        <taxon>Bacteria</taxon>
        <taxon>Pseudomonadati</taxon>
        <taxon>Thermodesulfobacteriota</taxon>
        <taxon>Desulfobulbia</taxon>
        <taxon>Desulfobulbales</taxon>
        <taxon>Desulfocapsaceae</taxon>
        <taxon>Desulfotalea</taxon>
    </lineage>
</organism>
<comment type="function">
    <text evidence="1">The UvrABC repair system catalyzes the recognition and processing of DNA lesions. UvrC both incises the 5' and 3' sides of the lesion. The N-terminal half is responsible for the 3' incision and the C-terminal half is responsible for the 5' incision.</text>
</comment>
<comment type="subunit">
    <text evidence="1">Interacts with UvrB in an incision complex.</text>
</comment>
<comment type="subcellular location">
    <subcellularLocation>
        <location evidence="1">Cytoplasm</location>
    </subcellularLocation>
</comment>
<comment type="similarity">
    <text evidence="1">Belongs to the UvrC family.</text>
</comment>